<organism>
    <name type="scientific">Arabidopsis thaliana</name>
    <name type="common">Mouse-ear cress</name>
    <dbReference type="NCBI Taxonomy" id="3702"/>
    <lineage>
        <taxon>Eukaryota</taxon>
        <taxon>Viridiplantae</taxon>
        <taxon>Streptophyta</taxon>
        <taxon>Embryophyta</taxon>
        <taxon>Tracheophyta</taxon>
        <taxon>Spermatophyta</taxon>
        <taxon>Magnoliopsida</taxon>
        <taxon>eudicotyledons</taxon>
        <taxon>Gunneridae</taxon>
        <taxon>Pentapetalae</taxon>
        <taxon>rosids</taxon>
        <taxon>malvids</taxon>
        <taxon>Brassicales</taxon>
        <taxon>Brassicaceae</taxon>
        <taxon>Camelineae</taxon>
        <taxon>Arabidopsis</taxon>
    </lineage>
</organism>
<dbReference type="EC" id="4.2.3.-"/>
<dbReference type="EMBL" id="AB018121">
    <property type="protein sequence ID" value="BAB01988.1"/>
    <property type="molecule type" value="Genomic_DNA"/>
</dbReference>
<dbReference type="EMBL" id="CP002686">
    <property type="protein sequence ID" value="AEE77537.2"/>
    <property type="molecule type" value="Genomic_DNA"/>
</dbReference>
<dbReference type="RefSeq" id="NP_189555.2">
    <property type="nucleotide sequence ID" value="NM_113834.2"/>
</dbReference>
<dbReference type="SMR" id="Q9LVP7"/>
<dbReference type="FunCoup" id="Q9LVP7">
    <property type="interactions" value="80"/>
</dbReference>
<dbReference type="STRING" id="3702.Q9LVP7"/>
<dbReference type="PaxDb" id="3702-AT3G29110.1"/>
<dbReference type="EnsemblPlants" id="AT3G29110.1">
    <property type="protein sequence ID" value="AT3G29110.1"/>
    <property type="gene ID" value="AT3G29110"/>
</dbReference>
<dbReference type="GeneID" id="822559"/>
<dbReference type="Gramene" id="AT3G29110.1">
    <property type="protein sequence ID" value="AT3G29110.1"/>
    <property type="gene ID" value="AT3G29110"/>
</dbReference>
<dbReference type="KEGG" id="ath:AT3G29110"/>
<dbReference type="Araport" id="AT3G29110"/>
<dbReference type="TAIR" id="AT3G29110"/>
<dbReference type="eggNOG" id="ENOG502SHPY">
    <property type="taxonomic scope" value="Eukaryota"/>
</dbReference>
<dbReference type="HOGENOM" id="CLU_003125_7_2_1"/>
<dbReference type="InParanoid" id="Q9LVP7"/>
<dbReference type="OMA" id="EVGHDEM"/>
<dbReference type="PhylomeDB" id="Q9LVP7"/>
<dbReference type="BioCyc" id="ARA:AT3G29110-MONOMER"/>
<dbReference type="UniPathway" id="UPA00213"/>
<dbReference type="PRO" id="PR:Q9LVP7"/>
<dbReference type="Proteomes" id="UP000006548">
    <property type="component" value="Chromosome 3"/>
</dbReference>
<dbReference type="ExpressionAtlas" id="Q9LVP7">
    <property type="expression patterns" value="baseline and differential"/>
</dbReference>
<dbReference type="GO" id="GO:0005737">
    <property type="term" value="C:cytoplasm"/>
    <property type="evidence" value="ECO:0007669"/>
    <property type="project" value="UniProtKB-SubCell"/>
</dbReference>
<dbReference type="GO" id="GO:0000287">
    <property type="term" value="F:magnesium ion binding"/>
    <property type="evidence" value="ECO:0007669"/>
    <property type="project" value="InterPro"/>
</dbReference>
<dbReference type="GO" id="GO:0010333">
    <property type="term" value="F:terpene synthase activity"/>
    <property type="evidence" value="ECO:0007669"/>
    <property type="project" value="InterPro"/>
</dbReference>
<dbReference type="GO" id="GO:0016102">
    <property type="term" value="P:diterpenoid biosynthetic process"/>
    <property type="evidence" value="ECO:0007669"/>
    <property type="project" value="InterPro"/>
</dbReference>
<dbReference type="CDD" id="cd00684">
    <property type="entry name" value="Terpene_cyclase_plant_C1"/>
    <property type="match status" value="1"/>
</dbReference>
<dbReference type="FunFam" id="1.10.600.10:FF:000007">
    <property type="entry name" value="Isoprene synthase, chloroplastic"/>
    <property type="match status" value="1"/>
</dbReference>
<dbReference type="FunFam" id="1.50.10.130:FF:000001">
    <property type="entry name" value="Isoprene synthase, chloroplastic"/>
    <property type="match status" value="1"/>
</dbReference>
<dbReference type="Gene3D" id="1.10.600.10">
    <property type="entry name" value="Farnesyl Diphosphate Synthase"/>
    <property type="match status" value="1"/>
</dbReference>
<dbReference type="Gene3D" id="1.50.10.130">
    <property type="entry name" value="Terpene synthase, N-terminal domain"/>
    <property type="match status" value="1"/>
</dbReference>
<dbReference type="InterPro" id="IPR008949">
    <property type="entry name" value="Isoprenoid_synthase_dom_sf"/>
</dbReference>
<dbReference type="InterPro" id="IPR034741">
    <property type="entry name" value="Terpene_cyclase-like_1_C"/>
</dbReference>
<dbReference type="InterPro" id="IPR044814">
    <property type="entry name" value="Terpene_cyclase_plant_C1"/>
</dbReference>
<dbReference type="InterPro" id="IPR001906">
    <property type="entry name" value="Terpene_synth_N"/>
</dbReference>
<dbReference type="InterPro" id="IPR036965">
    <property type="entry name" value="Terpene_synth_N_sf"/>
</dbReference>
<dbReference type="InterPro" id="IPR050148">
    <property type="entry name" value="Terpene_synthase-like"/>
</dbReference>
<dbReference type="InterPro" id="IPR005630">
    <property type="entry name" value="Terpene_synthase_metal-bd"/>
</dbReference>
<dbReference type="InterPro" id="IPR008930">
    <property type="entry name" value="Terpenoid_cyclase/PrenylTrfase"/>
</dbReference>
<dbReference type="PANTHER" id="PTHR31225">
    <property type="entry name" value="OS04G0344100 PROTEIN-RELATED"/>
    <property type="match status" value="1"/>
</dbReference>
<dbReference type="PANTHER" id="PTHR31225:SF242">
    <property type="entry name" value="TERPENOID SYNTHASE 9"/>
    <property type="match status" value="1"/>
</dbReference>
<dbReference type="Pfam" id="PF01397">
    <property type="entry name" value="Terpene_synth"/>
    <property type="match status" value="1"/>
</dbReference>
<dbReference type="Pfam" id="PF03936">
    <property type="entry name" value="Terpene_synth_C"/>
    <property type="match status" value="1"/>
</dbReference>
<dbReference type="SFLD" id="SFLDS00005">
    <property type="entry name" value="Isoprenoid_Synthase_Type_I"/>
    <property type="match status" value="1"/>
</dbReference>
<dbReference type="SFLD" id="SFLDG01019">
    <property type="entry name" value="Terpene_Cyclase_Like_1_C_Termi"/>
    <property type="match status" value="1"/>
</dbReference>
<dbReference type="SUPFAM" id="SSF48239">
    <property type="entry name" value="Terpenoid cyclases/Protein prenyltransferases"/>
    <property type="match status" value="1"/>
</dbReference>
<dbReference type="SUPFAM" id="SSF48576">
    <property type="entry name" value="Terpenoid synthases"/>
    <property type="match status" value="1"/>
</dbReference>
<accession>Q9LVP7</accession>
<accession>F4J1T1</accession>
<gene>
    <name type="primary">TPS16</name>
    <name type="ordered locus">At3g29110</name>
    <name type="ORF">MXE2.1</name>
</gene>
<reference key="1">
    <citation type="journal article" date="2000" name="DNA Res.">
        <title>Structural analysis of Arabidopsis thaliana chromosome 3. I. Sequence features of the regions of 4,504,864 bp covered by sixty P1 and TAC clones.</title>
        <authorList>
            <person name="Sato S."/>
            <person name="Nakamura Y."/>
            <person name="Kaneko T."/>
            <person name="Katoh T."/>
            <person name="Asamizu E."/>
            <person name="Tabata S."/>
        </authorList>
    </citation>
    <scope>NUCLEOTIDE SEQUENCE [LARGE SCALE GENOMIC DNA]</scope>
    <source>
        <strain>cv. Columbia</strain>
    </source>
</reference>
<reference key="2">
    <citation type="journal article" date="2017" name="Plant J.">
        <title>Araport11: a complete reannotation of the Arabidopsis thaliana reference genome.</title>
        <authorList>
            <person name="Cheng C.Y."/>
            <person name="Krishnakumar V."/>
            <person name="Chan A.P."/>
            <person name="Thibaud-Nissen F."/>
            <person name="Schobel S."/>
            <person name="Town C.D."/>
        </authorList>
    </citation>
    <scope>GENOME REANNOTATION</scope>
    <source>
        <strain>cv. Columbia</strain>
    </source>
</reference>
<reference key="3">
    <citation type="journal article" date="2002" name="Mol. Genet. Genomics">
        <title>Genomic analysis of the terpenoid synthase (AtTPS) gene family of Arabidopsis thaliana.</title>
        <authorList>
            <person name="Aubourg S."/>
            <person name="Lecharny A."/>
            <person name="Bohlmann J."/>
        </authorList>
    </citation>
    <scope>GENE FAMILY</scope>
    <scope>NOMENCLATURE</scope>
</reference>
<reference key="4">
    <citation type="journal article" date="2003" name="Plant Mol. Biol.">
        <title>Genome organization in Arabidopsis thaliana: a survey for genes involved in isoprenoid and chlorophyll metabolism.</title>
        <authorList>
            <person name="Lange B.M."/>
            <person name="Ghassemian M."/>
        </authorList>
    </citation>
    <scope>GENE FAMILY</scope>
</reference>
<proteinExistence type="inferred from homology"/>
<comment type="cofactor">
    <cofactor evidence="1">
        <name>Mg(2+)</name>
        <dbReference type="ChEBI" id="CHEBI:18420"/>
    </cofactor>
    <cofactor evidence="1">
        <name>Mn(2+)</name>
        <dbReference type="ChEBI" id="CHEBI:29035"/>
    </cofactor>
    <text evidence="1">Binds 3 Mg(2+) or Mn(2+) ions per subunit.</text>
</comment>
<comment type="pathway">
    <text>Secondary metabolite biosynthesis; terpenoid biosynthesis.</text>
</comment>
<comment type="subcellular location">
    <subcellularLocation>
        <location evidence="2">Cytoplasm</location>
    </subcellularLocation>
</comment>
<comment type="domain">
    <text>The Asp-Asp-Xaa-Xaa-Asp/Glu (DDXXD/E) motif is important for the catalytic activity, presumably through binding to Mg(2+).</text>
</comment>
<comment type="similarity">
    <text evidence="2">Belongs to the terpene synthase family. Tpsa subfamily.</text>
</comment>
<name>TPS16_ARATH</name>
<sequence>METITVFGPKHGSPLSLPSRTNMCWEMKPSRFPLTSVRGKPAKQVGLKVSASCDRPISKLPPSKWTNYFHSVLVDVSEMDVLEREIEALKPNVREMLMSSKGYDSVKKRSLMIYLLVSLGLAYHFEEEIEKSLKDGFEKIDEIIAGEDDLYTISTIFWVFRTYGYNMSSDVFRRFKEENGKFKESLIEDARGMLSLYEAAHLGTTTDYILDEALDFASNNLVSLAEDGMCPSHLSTHIRNALSISQHWNMEIIVAVQYIRFYEQEVGHDEMLLKFAKLNFNLVQRLYLQEVKILTKWYKDQDIHSKLPPYYRPVVTEMHFFSTATFFEPQFSHARILQTKLFMAELLVDDTCDRYATFSEVESLINSLQRWAPDDAMDTHPDYLKVVFKFILNAFEECEKELRPQGRSYSLEQTKEEYKRFAKSNLDLAKLAQAGNVPSFEEYMEVGKDEIGAFVIVAGSLMGMDNIDAVEAYDFLKSRSKFSQSSAEIVRYLNDLAGFEDDMRRGCVSTGLNCYMNQYGVTETEVFREFRKMVMNTCKIMNEEFLKTTDVPLRVLKTNFSCVRSGFVGYNEGEGVTYPEGKITKYLTSLYVDQI</sequence>
<protein>
    <recommendedName>
        <fullName>Putative terpenoid synthase 16</fullName>
        <shortName>AtTPS16</shortName>
        <ecNumber>4.2.3.-</ecNumber>
    </recommendedName>
</protein>
<evidence type="ECO:0000250" key="1"/>
<evidence type="ECO:0000305" key="2"/>
<feature type="chain" id="PRO_0000403707" description="Putative terpenoid synthase 16">
    <location>
        <begin position="1"/>
        <end position="595"/>
    </location>
</feature>
<feature type="short sequence motif" description="DDXXD motif">
    <location>
        <begin position="349"/>
        <end position="353"/>
    </location>
</feature>
<feature type="binding site" evidence="1">
    <location>
        <position position="349"/>
    </location>
    <ligand>
        <name>Mg(2+)</name>
        <dbReference type="ChEBI" id="CHEBI:18420"/>
        <label>1</label>
    </ligand>
</feature>
<feature type="binding site" evidence="1">
    <location>
        <position position="349"/>
    </location>
    <ligand>
        <name>Mg(2+)</name>
        <dbReference type="ChEBI" id="CHEBI:18420"/>
        <label>2</label>
    </ligand>
</feature>
<feature type="binding site" evidence="1">
    <location>
        <position position="353"/>
    </location>
    <ligand>
        <name>Mg(2+)</name>
        <dbReference type="ChEBI" id="CHEBI:18420"/>
        <label>1</label>
    </ligand>
</feature>
<feature type="binding site" evidence="1">
    <location>
        <position position="353"/>
    </location>
    <ligand>
        <name>Mg(2+)</name>
        <dbReference type="ChEBI" id="CHEBI:18420"/>
        <label>2</label>
    </ligand>
</feature>
<feature type="binding site" evidence="1">
    <location>
        <position position="494"/>
    </location>
    <ligand>
        <name>Mg(2+)</name>
        <dbReference type="ChEBI" id="CHEBI:18420"/>
        <label>3</label>
    </ligand>
</feature>
<feature type="binding site" evidence="1">
    <location>
        <position position="502"/>
    </location>
    <ligand>
        <name>Mg(2+)</name>
        <dbReference type="ChEBI" id="CHEBI:18420"/>
        <label>3</label>
    </ligand>
</feature>
<keyword id="KW-0963">Cytoplasm</keyword>
<keyword id="KW-0456">Lyase</keyword>
<keyword id="KW-0460">Magnesium</keyword>
<keyword id="KW-0464">Manganese</keyword>
<keyword id="KW-0479">Metal-binding</keyword>
<keyword id="KW-1185">Reference proteome</keyword>